<dbReference type="EC" id="2.7.1.-"/>
<dbReference type="EMBL" id="CU329670">
    <property type="protein sequence ID" value="CAB16595.1"/>
    <property type="molecule type" value="Genomic_DNA"/>
</dbReference>
<dbReference type="PIR" id="T38757">
    <property type="entry name" value="T38757"/>
</dbReference>
<dbReference type="RefSeq" id="NP_594181.1">
    <property type="nucleotide sequence ID" value="NM_001019605.2"/>
</dbReference>
<dbReference type="SMR" id="Q6LA56"/>
<dbReference type="BioGRID" id="280063">
    <property type="interactions" value="10"/>
</dbReference>
<dbReference type="FunCoup" id="Q6LA56">
    <property type="interactions" value="215"/>
</dbReference>
<dbReference type="STRING" id="284812.Q6LA56"/>
<dbReference type="SwissPalm" id="Q6LA56"/>
<dbReference type="PaxDb" id="4896-SPAC3H5.11.1"/>
<dbReference type="EnsemblFungi" id="SPAC3H5.11.1">
    <property type="protein sequence ID" value="SPAC3H5.11.1:pep"/>
    <property type="gene ID" value="SPAC3H5.11"/>
</dbReference>
<dbReference type="KEGG" id="spo:2543649"/>
<dbReference type="PomBase" id="SPAC3H5.11"/>
<dbReference type="VEuPathDB" id="FungiDB:SPAC3H5.11"/>
<dbReference type="eggNOG" id="KOG2178">
    <property type="taxonomic scope" value="Eukaryota"/>
</dbReference>
<dbReference type="HOGENOM" id="CLU_008831_1_1_1"/>
<dbReference type="InParanoid" id="Q6LA56"/>
<dbReference type="OMA" id="QKAFKEW"/>
<dbReference type="PhylomeDB" id="Q6LA56"/>
<dbReference type="PRO" id="PR:Q6LA56"/>
<dbReference type="Proteomes" id="UP000002485">
    <property type="component" value="Chromosome I"/>
</dbReference>
<dbReference type="GO" id="GO:0005829">
    <property type="term" value="C:cytosol"/>
    <property type="evidence" value="ECO:0007005"/>
    <property type="project" value="PomBase"/>
</dbReference>
<dbReference type="GO" id="GO:0005634">
    <property type="term" value="C:nucleus"/>
    <property type="evidence" value="ECO:0007005"/>
    <property type="project" value="PomBase"/>
</dbReference>
<dbReference type="GO" id="GO:0003951">
    <property type="term" value="F:NAD+ kinase activity"/>
    <property type="evidence" value="ECO:0000318"/>
    <property type="project" value="GO_Central"/>
</dbReference>
<dbReference type="GO" id="GO:0042736">
    <property type="term" value="F:NADH kinase activity"/>
    <property type="evidence" value="ECO:0000266"/>
    <property type="project" value="PomBase"/>
</dbReference>
<dbReference type="GO" id="GO:0019674">
    <property type="term" value="P:NAD metabolic process"/>
    <property type="evidence" value="ECO:0007669"/>
    <property type="project" value="InterPro"/>
</dbReference>
<dbReference type="GO" id="GO:0006741">
    <property type="term" value="P:NADP biosynthetic process"/>
    <property type="evidence" value="ECO:0000318"/>
    <property type="project" value="GO_Central"/>
</dbReference>
<dbReference type="Gene3D" id="3.40.50.10330">
    <property type="entry name" value="Probable inorganic polyphosphate/atp-NAD kinase, domain 1"/>
    <property type="match status" value="1"/>
</dbReference>
<dbReference type="Gene3D" id="2.60.200.30">
    <property type="entry name" value="Probable inorganic polyphosphate/atp-NAD kinase, domain 2"/>
    <property type="match status" value="1"/>
</dbReference>
<dbReference type="HAMAP" id="MF_00361">
    <property type="entry name" value="NAD_kinase"/>
    <property type="match status" value="1"/>
</dbReference>
<dbReference type="InterPro" id="IPR017438">
    <property type="entry name" value="ATP-NAD_kinase_N"/>
</dbReference>
<dbReference type="InterPro" id="IPR017437">
    <property type="entry name" value="ATP-NAD_kinase_PpnK-typ_C"/>
</dbReference>
<dbReference type="InterPro" id="IPR016064">
    <property type="entry name" value="NAD/diacylglycerol_kinase_sf"/>
</dbReference>
<dbReference type="InterPro" id="IPR002504">
    <property type="entry name" value="NADK"/>
</dbReference>
<dbReference type="PANTHER" id="PTHR20275:SF11">
    <property type="entry name" value="KINASE, PUTATIVE (AFU_ORTHOLOGUE AFUA_5G12870)-RELATED"/>
    <property type="match status" value="1"/>
</dbReference>
<dbReference type="PANTHER" id="PTHR20275">
    <property type="entry name" value="NAD KINASE"/>
    <property type="match status" value="1"/>
</dbReference>
<dbReference type="Pfam" id="PF01513">
    <property type="entry name" value="NAD_kinase"/>
    <property type="match status" value="1"/>
</dbReference>
<dbReference type="Pfam" id="PF20143">
    <property type="entry name" value="NAD_kinase_C"/>
    <property type="match status" value="1"/>
</dbReference>
<dbReference type="SUPFAM" id="SSF111331">
    <property type="entry name" value="NAD kinase/diacylglycerol kinase-like"/>
    <property type="match status" value="1"/>
</dbReference>
<accession>Q6LA56</accession>
<organism>
    <name type="scientific">Schizosaccharomyces pombe (strain 972 / ATCC 24843)</name>
    <name type="common">Fission yeast</name>
    <dbReference type="NCBI Taxonomy" id="284812"/>
    <lineage>
        <taxon>Eukaryota</taxon>
        <taxon>Fungi</taxon>
        <taxon>Dikarya</taxon>
        <taxon>Ascomycota</taxon>
        <taxon>Taphrinomycotina</taxon>
        <taxon>Schizosaccharomycetes</taxon>
        <taxon>Schizosaccharomycetales</taxon>
        <taxon>Schizosaccharomycetaceae</taxon>
        <taxon>Schizosaccharomyces</taxon>
    </lineage>
</organism>
<protein>
    <recommendedName>
        <fullName>Uncharacterized kinase C3H5.11</fullName>
        <ecNumber>2.7.1.-</ecNumber>
    </recommendedName>
</protein>
<sequence length="393" mass="44897">MAEFDDSCLPTNPTTENDYHGSFPYCSVHAQLYPYVSDCMVMHRKAPINEQEALRDVVWETRTINKKLHVTPIKPNITSILLVSKPGDEEVEEKLKEFVYWLISLDNITVFIQKSMEDLFEKTEKIQYWTTLLCTKHSQLFDLVLTLGGDGTVLYTSRLFQRTVPPIMPFAMGTLGFLTHFDVKKYKTSILEICNEMYVHLRTRFECRVMKKKNRTQWINIDEHLSQSLHATDTETHTFTDSLVVLNEVVIDRGPNTAMSDIMLYVDSKYLTTVKADGLCISTPTGSTAYSLAAGGSLCHPDISVMIVSPICAHSLSLRPIHVPDSMALHVVIPQDAQQSSWISFDGRNRTELLPGDYLTVRISRYPFPTVHSTEEDADWFESIKRTLMWNQN</sequence>
<feature type="chain" id="PRO_0000316601" description="Uncharacterized kinase C3H5.11">
    <location>
        <begin position="1"/>
        <end position="393"/>
    </location>
</feature>
<evidence type="ECO:0000269" key="1">
    <source>
    </source>
</evidence>
<evidence type="ECO:0000305" key="2"/>
<proteinExistence type="inferred from homology"/>
<reference key="1">
    <citation type="journal article" date="2002" name="Nature">
        <title>The genome sequence of Schizosaccharomyces pombe.</title>
        <authorList>
            <person name="Wood V."/>
            <person name="Gwilliam R."/>
            <person name="Rajandream M.A."/>
            <person name="Lyne M.H."/>
            <person name="Lyne R."/>
            <person name="Stewart A."/>
            <person name="Sgouros J.G."/>
            <person name="Peat N."/>
            <person name="Hayles J."/>
            <person name="Baker S.G."/>
            <person name="Basham D."/>
            <person name="Bowman S."/>
            <person name="Brooks K."/>
            <person name="Brown D."/>
            <person name="Brown S."/>
            <person name="Chillingworth T."/>
            <person name="Churcher C.M."/>
            <person name="Collins M."/>
            <person name="Connor R."/>
            <person name="Cronin A."/>
            <person name="Davis P."/>
            <person name="Feltwell T."/>
            <person name="Fraser A."/>
            <person name="Gentles S."/>
            <person name="Goble A."/>
            <person name="Hamlin N."/>
            <person name="Harris D.E."/>
            <person name="Hidalgo J."/>
            <person name="Hodgson G."/>
            <person name="Holroyd S."/>
            <person name="Hornsby T."/>
            <person name="Howarth S."/>
            <person name="Huckle E.J."/>
            <person name="Hunt S."/>
            <person name="Jagels K."/>
            <person name="James K.D."/>
            <person name="Jones L."/>
            <person name="Jones M."/>
            <person name="Leather S."/>
            <person name="McDonald S."/>
            <person name="McLean J."/>
            <person name="Mooney P."/>
            <person name="Moule S."/>
            <person name="Mungall K.L."/>
            <person name="Murphy L.D."/>
            <person name="Niblett D."/>
            <person name="Odell C."/>
            <person name="Oliver K."/>
            <person name="O'Neil S."/>
            <person name="Pearson D."/>
            <person name="Quail M.A."/>
            <person name="Rabbinowitsch E."/>
            <person name="Rutherford K.M."/>
            <person name="Rutter S."/>
            <person name="Saunders D."/>
            <person name="Seeger K."/>
            <person name="Sharp S."/>
            <person name="Skelton J."/>
            <person name="Simmonds M.N."/>
            <person name="Squares R."/>
            <person name="Squares S."/>
            <person name="Stevens K."/>
            <person name="Taylor K."/>
            <person name="Taylor R.G."/>
            <person name="Tivey A."/>
            <person name="Walsh S.V."/>
            <person name="Warren T."/>
            <person name="Whitehead S."/>
            <person name="Woodward J.R."/>
            <person name="Volckaert G."/>
            <person name="Aert R."/>
            <person name="Robben J."/>
            <person name="Grymonprez B."/>
            <person name="Weltjens I."/>
            <person name="Vanstreels E."/>
            <person name="Rieger M."/>
            <person name="Schaefer M."/>
            <person name="Mueller-Auer S."/>
            <person name="Gabel C."/>
            <person name="Fuchs M."/>
            <person name="Duesterhoeft A."/>
            <person name="Fritzc C."/>
            <person name="Holzer E."/>
            <person name="Moestl D."/>
            <person name="Hilbert H."/>
            <person name="Borzym K."/>
            <person name="Langer I."/>
            <person name="Beck A."/>
            <person name="Lehrach H."/>
            <person name="Reinhardt R."/>
            <person name="Pohl T.M."/>
            <person name="Eger P."/>
            <person name="Zimmermann W."/>
            <person name="Wedler H."/>
            <person name="Wambutt R."/>
            <person name="Purnelle B."/>
            <person name="Goffeau A."/>
            <person name="Cadieu E."/>
            <person name="Dreano S."/>
            <person name="Gloux S."/>
            <person name="Lelaure V."/>
            <person name="Mottier S."/>
            <person name="Galibert F."/>
            <person name="Aves S.J."/>
            <person name="Xiang Z."/>
            <person name="Hunt C."/>
            <person name="Moore K."/>
            <person name="Hurst S.M."/>
            <person name="Lucas M."/>
            <person name="Rochet M."/>
            <person name="Gaillardin C."/>
            <person name="Tallada V.A."/>
            <person name="Garzon A."/>
            <person name="Thode G."/>
            <person name="Daga R.R."/>
            <person name="Cruzado L."/>
            <person name="Jimenez J."/>
            <person name="Sanchez M."/>
            <person name="del Rey F."/>
            <person name="Benito J."/>
            <person name="Dominguez A."/>
            <person name="Revuelta J.L."/>
            <person name="Moreno S."/>
            <person name="Armstrong J."/>
            <person name="Forsburg S.L."/>
            <person name="Cerutti L."/>
            <person name="Lowe T."/>
            <person name="McCombie W.R."/>
            <person name="Paulsen I."/>
            <person name="Potashkin J."/>
            <person name="Shpakovski G.V."/>
            <person name="Ussery D."/>
            <person name="Barrell B.G."/>
            <person name="Nurse P."/>
        </authorList>
    </citation>
    <scope>NUCLEOTIDE SEQUENCE [LARGE SCALE GENOMIC DNA]</scope>
    <source>
        <strain>972 / ATCC 24843</strain>
    </source>
</reference>
<reference key="2">
    <citation type="journal article" date="2006" name="Nat. Biotechnol.">
        <title>ORFeome cloning and global analysis of protein localization in the fission yeast Schizosaccharomyces pombe.</title>
        <authorList>
            <person name="Matsuyama A."/>
            <person name="Arai R."/>
            <person name="Yashiroda Y."/>
            <person name="Shirai A."/>
            <person name="Kamata A."/>
            <person name="Sekido S."/>
            <person name="Kobayashi Y."/>
            <person name="Hashimoto A."/>
            <person name="Hamamoto M."/>
            <person name="Hiraoka Y."/>
            <person name="Horinouchi S."/>
            <person name="Yoshida M."/>
        </authorList>
    </citation>
    <scope>SUBCELLULAR LOCATION [LARGE SCALE ANALYSIS]</scope>
</reference>
<keyword id="KW-0963">Cytoplasm</keyword>
<keyword id="KW-0418">Kinase</keyword>
<keyword id="KW-0520">NAD</keyword>
<keyword id="KW-0521">NADP</keyword>
<keyword id="KW-0539">Nucleus</keyword>
<keyword id="KW-1185">Reference proteome</keyword>
<keyword id="KW-0808">Transferase</keyword>
<name>YF4B_SCHPO</name>
<comment type="subcellular location">
    <subcellularLocation>
        <location evidence="1">Cytoplasm</location>
    </subcellularLocation>
    <subcellularLocation>
        <location evidence="1">Nucleus</location>
    </subcellularLocation>
</comment>
<comment type="similarity">
    <text evidence="2">Belongs to the NAD kinase family.</text>
</comment>
<gene>
    <name type="ORF">SPAC3H5.11</name>
</gene>